<protein>
    <recommendedName>
        <fullName evidence="1">UPF0178 protein USA300HOU_0704</fullName>
    </recommendedName>
</protein>
<proteinExistence type="inferred from homology"/>
<sequence length="152" mass="17258">MTHIIIDGDACPVVDSIIDLTTETGIFVTIIRSFSHFSNQLYPPHVSTLYVDDGPDAVDYKIVQLSTKDDIVVTQDYGLASLLVDKVLIVMHHNGKIYNSKNIQQLLDKRYMNAQIRKQGGRHKGPPPFTKQDQKVFEQSLLKVIHRIKELD</sequence>
<name>Y704_STAAT</name>
<dbReference type="EMBL" id="CP000730">
    <property type="protein sequence ID" value="ABX28725.1"/>
    <property type="molecule type" value="Genomic_DNA"/>
</dbReference>
<dbReference type="RefSeq" id="WP_000148828.1">
    <property type="nucleotide sequence ID" value="NC_010079.1"/>
</dbReference>
<dbReference type="SMR" id="A8YZV2"/>
<dbReference type="KEGG" id="sax:USA300HOU_0704"/>
<dbReference type="HOGENOM" id="CLU_106619_0_0_9"/>
<dbReference type="BioCyc" id="SAUR451516-HMP:GTV5-721-MONOMER"/>
<dbReference type="HAMAP" id="MF_00489">
    <property type="entry name" value="UPF0178"/>
    <property type="match status" value="1"/>
</dbReference>
<dbReference type="InterPro" id="IPR003791">
    <property type="entry name" value="UPF0178"/>
</dbReference>
<dbReference type="NCBIfam" id="NF001095">
    <property type="entry name" value="PRK00124.1"/>
    <property type="match status" value="1"/>
</dbReference>
<dbReference type="PANTHER" id="PTHR35146">
    <property type="entry name" value="UPF0178 PROTEIN YAII"/>
    <property type="match status" value="1"/>
</dbReference>
<dbReference type="PANTHER" id="PTHR35146:SF1">
    <property type="entry name" value="UPF0178 PROTEIN YAII"/>
    <property type="match status" value="1"/>
</dbReference>
<dbReference type="Pfam" id="PF02639">
    <property type="entry name" value="DUF188"/>
    <property type="match status" value="1"/>
</dbReference>
<reference key="1">
    <citation type="journal article" date="2007" name="BMC Microbiol.">
        <title>Subtle genetic changes enhance virulence of methicillin resistant and sensitive Staphylococcus aureus.</title>
        <authorList>
            <person name="Highlander S.K."/>
            <person name="Hulten K.G."/>
            <person name="Qin X."/>
            <person name="Jiang H."/>
            <person name="Yerrapragada S."/>
            <person name="Mason E.O. Jr."/>
            <person name="Shang Y."/>
            <person name="Williams T.M."/>
            <person name="Fortunov R.M."/>
            <person name="Liu Y."/>
            <person name="Igboeli O."/>
            <person name="Petrosino J."/>
            <person name="Tirumalai M."/>
            <person name="Uzman A."/>
            <person name="Fox G.E."/>
            <person name="Cardenas A.M."/>
            <person name="Muzny D.M."/>
            <person name="Hemphill L."/>
            <person name="Ding Y."/>
            <person name="Dugan S."/>
            <person name="Blyth P.R."/>
            <person name="Buhay C.J."/>
            <person name="Dinh H.H."/>
            <person name="Hawes A.C."/>
            <person name="Holder M."/>
            <person name="Kovar C.L."/>
            <person name="Lee S.L."/>
            <person name="Liu W."/>
            <person name="Nazareth L.V."/>
            <person name="Wang Q."/>
            <person name="Zhou J."/>
            <person name="Kaplan S.L."/>
            <person name="Weinstock G.M."/>
        </authorList>
    </citation>
    <scope>NUCLEOTIDE SEQUENCE [LARGE SCALE GENOMIC DNA]</scope>
    <source>
        <strain>USA300 / TCH1516</strain>
    </source>
</reference>
<organism>
    <name type="scientific">Staphylococcus aureus (strain USA300 / TCH1516)</name>
    <dbReference type="NCBI Taxonomy" id="451516"/>
    <lineage>
        <taxon>Bacteria</taxon>
        <taxon>Bacillati</taxon>
        <taxon>Bacillota</taxon>
        <taxon>Bacilli</taxon>
        <taxon>Bacillales</taxon>
        <taxon>Staphylococcaceae</taxon>
        <taxon>Staphylococcus</taxon>
    </lineage>
</organism>
<gene>
    <name type="ordered locus">USA300HOU_0704</name>
</gene>
<feature type="chain" id="PRO_1000081390" description="UPF0178 protein USA300HOU_0704">
    <location>
        <begin position="1"/>
        <end position="152"/>
    </location>
</feature>
<evidence type="ECO:0000255" key="1">
    <source>
        <dbReference type="HAMAP-Rule" id="MF_00489"/>
    </source>
</evidence>
<accession>A8YZV2</accession>
<comment type="similarity">
    <text evidence="1">Belongs to the UPF0178 family.</text>
</comment>